<name>PGK_LACLS</name>
<protein>
    <recommendedName>
        <fullName evidence="1">Phosphoglycerate kinase</fullName>
        <ecNumber evidence="1">2.7.2.3</ecNumber>
    </recommendedName>
</protein>
<comment type="catalytic activity">
    <reaction evidence="1">
        <text>(2R)-3-phosphoglycerate + ATP = (2R)-3-phospho-glyceroyl phosphate + ADP</text>
        <dbReference type="Rhea" id="RHEA:14801"/>
        <dbReference type="ChEBI" id="CHEBI:30616"/>
        <dbReference type="ChEBI" id="CHEBI:57604"/>
        <dbReference type="ChEBI" id="CHEBI:58272"/>
        <dbReference type="ChEBI" id="CHEBI:456216"/>
        <dbReference type="EC" id="2.7.2.3"/>
    </reaction>
</comment>
<comment type="pathway">
    <text evidence="1">Carbohydrate degradation; glycolysis; pyruvate from D-glyceraldehyde 3-phosphate: step 2/5.</text>
</comment>
<comment type="subunit">
    <text evidence="1">Monomer.</text>
</comment>
<comment type="subcellular location">
    <subcellularLocation>
        <location evidence="1">Cytoplasm</location>
    </subcellularLocation>
</comment>
<comment type="similarity">
    <text evidence="1">Belongs to the phosphoglycerate kinase family.</text>
</comment>
<accession>Q032K6</accession>
<gene>
    <name evidence="1" type="primary">pgk</name>
    <name type="ordered locus">LACR_0248</name>
</gene>
<feature type="chain" id="PRO_1000009624" description="Phosphoglycerate kinase">
    <location>
        <begin position="1"/>
        <end position="398"/>
    </location>
</feature>
<feature type="binding site" evidence="1">
    <location>
        <begin position="21"/>
        <end position="23"/>
    </location>
    <ligand>
        <name>substrate</name>
    </ligand>
</feature>
<feature type="binding site" evidence="1">
    <location>
        <position position="36"/>
    </location>
    <ligand>
        <name>substrate</name>
    </ligand>
</feature>
<feature type="binding site" evidence="1">
    <location>
        <begin position="59"/>
        <end position="62"/>
    </location>
    <ligand>
        <name>substrate</name>
    </ligand>
</feature>
<feature type="binding site" evidence="1">
    <location>
        <position position="119"/>
    </location>
    <ligand>
        <name>substrate</name>
    </ligand>
</feature>
<feature type="binding site" evidence="1">
    <location>
        <position position="157"/>
    </location>
    <ligand>
        <name>substrate</name>
    </ligand>
</feature>
<feature type="binding site" evidence="1">
    <location>
        <position position="208"/>
    </location>
    <ligand>
        <name>ATP</name>
        <dbReference type="ChEBI" id="CHEBI:30616"/>
    </ligand>
</feature>
<feature type="binding site" evidence="1">
    <location>
        <position position="296"/>
    </location>
    <ligand>
        <name>ATP</name>
        <dbReference type="ChEBI" id="CHEBI:30616"/>
    </ligand>
</feature>
<feature type="binding site" evidence="1">
    <location>
        <position position="327"/>
    </location>
    <ligand>
        <name>ATP</name>
        <dbReference type="ChEBI" id="CHEBI:30616"/>
    </ligand>
</feature>
<feature type="binding site" evidence="1">
    <location>
        <begin position="354"/>
        <end position="357"/>
    </location>
    <ligand>
        <name>ATP</name>
        <dbReference type="ChEBI" id="CHEBI:30616"/>
    </ligand>
</feature>
<proteinExistence type="inferred from homology"/>
<reference key="1">
    <citation type="journal article" date="2006" name="Proc. Natl. Acad. Sci. U.S.A.">
        <title>Comparative genomics of the lactic acid bacteria.</title>
        <authorList>
            <person name="Makarova K.S."/>
            <person name="Slesarev A."/>
            <person name="Wolf Y.I."/>
            <person name="Sorokin A."/>
            <person name="Mirkin B."/>
            <person name="Koonin E.V."/>
            <person name="Pavlov A."/>
            <person name="Pavlova N."/>
            <person name="Karamychev V."/>
            <person name="Polouchine N."/>
            <person name="Shakhova V."/>
            <person name="Grigoriev I."/>
            <person name="Lou Y."/>
            <person name="Rohksar D."/>
            <person name="Lucas S."/>
            <person name="Huang K."/>
            <person name="Goodstein D.M."/>
            <person name="Hawkins T."/>
            <person name="Plengvidhya V."/>
            <person name="Welker D."/>
            <person name="Hughes J."/>
            <person name="Goh Y."/>
            <person name="Benson A."/>
            <person name="Baldwin K."/>
            <person name="Lee J.-H."/>
            <person name="Diaz-Muniz I."/>
            <person name="Dosti B."/>
            <person name="Smeianov V."/>
            <person name="Wechter W."/>
            <person name="Barabote R."/>
            <person name="Lorca G."/>
            <person name="Altermann E."/>
            <person name="Barrangou R."/>
            <person name="Ganesan B."/>
            <person name="Xie Y."/>
            <person name="Rawsthorne H."/>
            <person name="Tamir D."/>
            <person name="Parker C."/>
            <person name="Breidt F."/>
            <person name="Broadbent J.R."/>
            <person name="Hutkins R."/>
            <person name="O'Sullivan D."/>
            <person name="Steele J."/>
            <person name="Unlu G."/>
            <person name="Saier M.H. Jr."/>
            <person name="Klaenhammer T."/>
            <person name="Richardson P."/>
            <person name="Kozyavkin S."/>
            <person name="Weimer B.C."/>
            <person name="Mills D.A."/>
        </authorList>
    </citation>
    <scope>NUCLEOTIDE SEQUENCE [LARGE SCALE GENOMIC DNA]</scope>
    <source>
        <strain>SK11</strain>
    </source>
</reference>
<sequence length="398" mass="42094">MAKLTVKDVELKGKKVLVRVDFNVPIKDGVITNDNRITAALPTIKYILEQGGRAVLFSHLGRVKEEADKAGKSLAPVAKALSEKLGQDVVFPGTTRGAELEAAINELKDGEILLVENTRFEDIDGKKESKNDPELGKYWASLGDGIFVNDAFGTAHRAHASNVGISANVEKAVAGFLLENEIAYIQEAVEAPERPFVAILGGSKVSDKIGVIENLLSKADKVIIGGGMAYTFLKAQGYEIGTSLVEDDKLDLAKELLEKAAGKLILPLDHKVANAFAGYTEVKETADQNIPAGFMGLDVASKTIADYNTQLEGAKTVVWNGPVGVFENPDFQAGTVGLMEAIVKQPGVKSIIGGGDSAAAAINLGYAEKFSWISTGGGASMELLEGKVLPGLAALTEK</sequence>
<keyword id="KW-0067">ATP-binding</keyword>
<keyword id="KW-0963">Cytoplasm</keyword>
<keyword id="KW-0324">Glycolysis</keyword>
<keyword id="KW-0418">Kinase</keyword>
<keyword id="KW-0547">Nucleotide-binding</keyword>
<keyword id="KW-0808">Transferase</keyword>
<evidence type="ECO:0000255" key="1">
    <source>
        <dbReference type="HAMAP-Rule" id="MF_00145"/>
    </source>
</evidence>
<dbReference type="EC" id="2.7.2.3" evidence="1"/>
<dbReference type="EMBL" id="CP000425">
    <property type="protein sequence ID" value="ABJ71866.1"/>
    <property type="molecule type" value="Genomic_DNA"/>
</dbReference>
<dbReference type="RefSeq" id="WP_011675278.1">
    <property type="nucleotide sequence ID" value="NC_008527.1"/>
</dbReference>
<dbReference type="SMR" id="Q032K6"/>
<dbReference type="KEGG" id="llc:LACR_0248"/>
<dbReference type="HOGENOM" id="CLU_025427_0_2_9"/>
<dbReference type="UniPathway" id="UPA00109">
    <property type="reaction ID" value="UER00185"/>
</dbReference>
<dbReference type="Proteomes" id="UP000000240">
    <property type="component" value="Chromosome"/>
</dbReference>
<dbReference type="GO" id="GO:0005829">
    <property type="term" value="C:cytosol"/>
    <property type="evidence" value="ECO:0007669"/>
    <property type="project" value="TreeGrafter"/>
</dbReference>
<dbReference type="GO" id="GO:0043531">
    <property type="term" value="F:ADP binding"/>
    <property type="evidence" value="ECO:0007669"/>
    <property type="project" value="TreeGrafter"/>
</dbReference>
<dbReference type="GO" id="GO:0005524">
    <property type="term" value="F:ATP binding"/>
    <property type="evidence" value="ECO:0007669"/>
    <property type="project" value="UniProtKB-KW"/>
</dbReference>
<dbReference type="GO" id="GO:0004618">
    <property type="term" value="F:phosphoglycerate kinase activity"/>
    <property type="evidence" value="ECO:0007669"/>
    <property type="project" value="UniProtKB-UniRule"/>
</dbReference>
<dbReference type="GO" id="GO:0006094">
    <property type="term" value="P:gluconeogenesis"/>
    <property type="evidence" value="ECO:0007669"/>
    <property type="project" value="TreeGrafter"/>
</dbReference>
<dbReference type="GO" id="GO:0006096">
    <property type="term" value="P:glycolytic process"/>
    <property type="evidence" value="ECO:0007669"/>
    <property type="project" value="UniProtKB-UniRule"/>
</dbReference>
<dbReference type="FunFam" id="3.40.50.1260:FF:000001">
    <property type="entry name" value="Phosphoglycerate kinase"/>
    <property type="match status" value="1"/>
</dbReference>
<dbReference type="FunFam" id="3.40.50.1260:FF:000008">
    <property type="entry name" value="Phosphoglycerate kinase"/>
    <property type="match status" value="1"/>
</dbReference>
<dbReference type="Gene3D" id="3.40.50.1260">
    <property type="entry name" value="Phosphoglycerate kinase, N-terminal domain"/>
    <property type="match status" value="2"/>
</dbReference>
<dbReference type="HAMAP" id="MF_00145">
    <property type="entry name" value="Phosphoglyc_kinase"/>
    <property type="match status" value="1"/>
</dbReference>
<dbReference type="InterPro" id="IPR001576">
    <property type="entry name" value="Phosphoglycerate_kinase"/>
</dbReference>
<dbReference type="InterPro" id="IPR015911">
    <property type="entry name" value="Phosphoglycerate_kinase_CS"/>
</dbReference>
<dbReference type="InterPro" id="IPR015824">
    <property type="entry name" value="Phosphoglycerate_kinase_N"/>
</dbReference>
<dbReference type="InterPro" id="IPR036043">
    <property type="entry name" value="Phosphoglycerate_kinase_sf"/>
</dbReference>
<dbReference type="PANTHER" id="PTHR11406">
    <property type="entry name" value="PHOSPHOGLYCERATE KINASE"/>
    <property type="match status" value="1"/>
</dbReference>
<dbReference type="PANTHER" id="PTHR11406:SF23">
    <property type="entry name" value="PHOSPHOGLYCERATE KINASE 1, CHLOROPLASTIC-RELATED"/>
    <property type="match status" value="1"/>
</dbReference>
<dbReference type="Pfam" id="PF00162">
    <property type="entry name" value="PGK"/>
    <property type="match status" value="1"/>
</dbReference>
<dbReference type="PIRSF" id="PIRSF000724">
    <property type="entry name" value="Pgk"/>
    <property type="match status" value="1"/>
</dbReference>
<dbReference type="PRINTS" id="PR00477">
    <property type="entry name" value="PHGLYCKINASE"/>
</dbReference>
<dbReference type="SUPFAM" id="SSF53748">
    <property type="entry name" value="Phosphoglycerate kinase"/>
    <property type="match status" value="1"/>
</dbReference>
<dbReference type="PROSITE" id="PS00111">
    <property type="entry name" value="PGLYCERATE_KINASE"/>
    <property type="match status" value="1"/>
</dbReference>
<organism>
    <name type="scientific">Lactococcus lactis subsp. cremoris (strain SK11)</name>
    <dbReference type="NCBI Taxonomy" id="272622"/>
    <lineage>
        <taxon>Bacteria</taxon>
        <taxon>Bacillati</taxon>
        <taxon>Bacillota</taxon>
        <taxon>Bacilli</taxon>
        <taxon>Lactobacillales</taxon>
        <taxon>Streptococcaceae</taxon>
        <taxon>Lactococcus</taxon>
        <taxon>Lactococcus cremoris subsp. cremoris</taxon>
    </lineage>
</organism>